<keyword id="KW-0119">Carbohydrate metabolism</keyword>
<keyword id="KW-0963">Cytoplasm</keyword>
<keyword id="KW-0413">Isomerase</keyword>
<keyword id="KW-0460">Magnesium</keyword>
<keyword id="KW-0479">Metal-binding</keyword>
<keyword id="KW-0859">Xylose metabolism</keyword>
<reference key="1">
    <citation type="journal article" date="2007" name="PLoS Biol.">
        <title>Evolution of symbiotic bacteria in the distal human intestine.</title>
        <authorList>
            <person name="Xu J."/>
            <person name="Mahowald M.A."/>
            <person name="Ley R.E."/>
            <person name="Lozupone C.A."/>
            <person name="Hamady M."/>
            <person name="Martens E.C."/>
            <person name="Henrissat B."/>
            <person name="Coutinho P.M."/>
            <person name="Minx P."/>
            <person name="Latreille P."/>
            <person name="Cordum H."/>
            <person name="Van Brunt A."/>
            <person name="Kim K."/>
            <person name="Fulton R.S."/>
            <person name="Fulton L.A."/>
            <person name="Clifton S.W."/>
            <person name="Wilson R.K."/>
            <person name="Knight R.D."/>
            <person name="Gordon J.I."/>
        </authorList>
    </citation>
    <scope>NUCLEOTIDE SEQUENCE [LARGE SCALE GENOMIC DNA]</scope>
    <source>
        <strain>ATCC 8482 / DSM 1447 / JCM 5826 / CCUG 4940 / NBRC 14291 / NCTC 11154</strain>
    </source>
</reference>
<gene>
    <name evidence="1" type="primary">xylA</name>
    <name type="ordered locus">BVU_3953</name>
</gene>
<name>XYLA_PHOV8</name>
<comment type="catalytic activity">
    <reaction evidence="1">
        <text>alpha-D-xylose = alpha-D-xylulofuranose</text>
        <dbReference type="Rhea" id="RHEA:22816"/>
        <dbReference type="ChEBI" id="CHEBI:28518"/>
        <dbReference type="ChEBI" id="CHEBI:188998"/>
        <dbReference type="EC" id="5.3.1.5"/>
    </reaction>
</comment>
<comment type="cofactor">
    <cofactor evidence="1">
        <name>Mg(2+)</name>
        <dbReference type="ChEBI" id="CHEBI:18420"/>
    </cofactor>
    <text evidence="1">Binds 2 magnesium ions per subunit.</text>
</comment>
<comment type="subunit">
    <text evidence="1">Homotetramer.</text>
</comment>
<comment type="subcellular location">
    <subcellularLocation>
        <location evidence="1">Cytoplasm</location>
    </subcellularLocation>
</comment>
<comment type="similarity">
    <text evidence="1">Belongs to the xylose isomerase family.</text>
</comment>
<dbReference type="EC" id="5.3.1.5" evidence="1"/>
<dbReference type="EMBL" id="CP000139">
    <property type="protein sequence ID" value="ABR41556.1"/>
    <property type="molecule type" value="Genomic_DNA"/>
</dbReference>
<dbReference type="RefSeq" id="WP_005851486.1">
    <property type="nucleotide sequence ID" value="NZ_JANSWM010000097.1"/>
</dbReference>
<dbReference type="SMR" id="A6L792"/>
<dbReference type="STRING" id="435590.BVU_3953"/>
<dbReference type="PaxDb" id="435590-BVU_3953"/>
<dbReference type="GeneID" id="93447994"/>
<dbReference type="KEGG" id="bvu:BVU_3953"/>
<dbReference type="eggNOG" id="COG2115">
    <property type="taxonomic scope" value="Bacteria"/>
</dbReference>
<dbReference type="HOGENOM" id="CLU_037261_1_0_10"/>
<dbReference type="BioCyc" id="BVUL435590:G1G59-4089-MONOMER"/>
<dbReference type="Proteomes" id="UP000002861">
    <property type="component" value="Chromosome"/>
</dbReference>
<dbReference type="GO" id="GO:0005737">
    <property type="term" value="C:cytoplasm"/>
    <property type="evidence" value="ECO:0007669"/>
    <property type="project" value="UniProtKB-SubCell"/>
</dbReference>
<dbReference type="GO" id="GO:0000287">
    <property type="term" value="F:magnesium ion binding"/>
    <property type="evidence" value="ECO:0007669"/>
    <property type="project" value="UniProtKB-UniRule"/>
</dbReference>
<dbReference type="GO" id="GO:0009045">
    <property type="term" value="F:xylose isomerase activity"/>
    <property type="evidence" value="ECO:0007669"/>
    <property type="project" value="UniProtKB-UniRule"/>
</dbReference>
<dbReference type="GO" id="GO:0042732">
    <property type="term" value="P:D-xylose metabolic process"/>
    <property type="evidence" value="ECO:0007669"/>
    <property type="project" value="UniProtKB-UniRule"/>
</dbReference>
<dbReference type="FunFam" id="3.20.20.150:FF:000002">
    <property type="entry name" value="Xylose isomerase"/>
    <property type="match status" value="1"/>
</dbReference>
<dbReference type="Gene3D" id="3.20.20.150">
    <property type="entry name" value="Divalent-metal-dependent TIM barrel enzymes"/>
    <property type="match status" value="1"/>
</dbReference>
<dbReference type="HAMAP" id="MF_00455">
    <property type="entry name" value="Xylose_isom_A"/>
    <property type="match status" value="1"/>
</dbReference>
<dbReference type="InterPro" id="IPR036237">
    <property type="entry name" value="Xyl_isomerase-like_sf"/>
</dbReference>
<dbReference type="InterPro" id="IPR013022">
    <property type="entry name" value="Xyl_isomerase-like_TIM-brl"/>
</dbReference>
<dbReference type="InterPro" id="IPR013452">
    <property type="entry name" value="Xylose_isom_bac"/>
</dbReference>
<dbReference type="InterPro" id="IPR001998">
    <property type="entry name" value="Xylose_isomerase"/>
</dbReference>
<dbReference type="NCBIfam" id="NF003998">
    <property type="entry name" value="PRK05474.1"/>
    <property type="match status" value="1"/>
</dbReference>
<dbReference type="NCBIfam" id="TIGR02630">
    <property type="entry name" value="xylose_isom_A"/>
    <property type="match status" value="1"/>
</dbReference>
<dbReference type="PANTHER" id="PTHR48408">
    <property type="match status" value="1"/>
</dbReference>
<dbReference type="PANTHER" id="PTHR48408:SF1">
    <property type="entry name" value="XYLOSE ISOMERASE"/>
    <property type="match status" value="1"/>
</dbReference>
<dbReference type="Pfam" id="PF01261">
    <property type="entry name" value="AP_endonuc_2"/>
    <property type="match status" value="1"/>
</dbReference>
<dbReference type="PRINTS" id="PR00688">
    <property type="entry name" value="XYLOSISMRASE"/>
</dbReference>
<dbReference type="SUPFAM" id="SSF51658">
    <property type="entry name" value="Xylose isomerase-like"/>
    <property type="match status" value="1"/>
</dbReference>
<dbReference type="PROSITE" id="PS51415">
    <property type="entry name" value="XYLOSE_ISOMERASE"/>
    <property type="match status" value="1"/>
</dbReference>
<feature type="chain" id="PRO_1000026430" description="Xylose isomerase">
    <location>
        <begin position="1"/>
        <end position="438"/>
    </location>
</feature>
<feature type="active site" evidence="1">
    <location>
        <position position="103"/>
    </location>
</feature>
<feature type="active site" evidence="1">
    <location>
        <position position="106"/>
    </location>
</feature>
<feature type="binding site" evidence="1">
    <location>
        <position position="234"/>
    </location>
    <ligand>
        <name>Mg(2+)</name>
        <dbReference type="ChEBI" id="CHEBI:18420"/>
        <label>1</label>
    </ligand>
</feature>
<feature type="binding site" evidence="1">
    <location>
        <position position="270"/>
    </location>
    <ligand>
        <name>Mg(2+)</name>
        <dbReference type="ChEBI" id="CHEBI:18420"/>
        <label>1</label>
    </ligand>
</feature>
<feature type="binding site" evidence="1">
    <location>
        <position position="270"/>
    </location>
    <ligand>
        <name>Mg(2+)</name>
        <dbReference type="ChEBI" id="CHEBI:18420"/>
        <label>2</label>
    </ligand>
</feature>
<feature type="binding site" evidence="1">
    <location>
        <position position="273"/>
    </location>
    <ligand>
        <name>Mg(2+)</name>
        <dbReference type="ChEBI" id="CHEBI:18420"/>
        <label>2</label>
    </ligand>
</feature>
<feature type="binding site" evidence="1">
    <location>
        <position position="298"/>
    </location>
    <ligand>
        <name>Mg(2+)</name>
        <dbReference type="ChEBI" id="CHEBI:18420"/>
        <label>1</label>
    </ligand>
</feature>
<feature type="binding site" evidence="1">
    <location>
        <position position="309"/>
    </location>
    <ligand>
        <name>Mg(2+)</name>
        <dbReference type="ChEBI" id="CHEBI:18420"/>
        <label>2</label>
    </ligand>
</feature>
<feature type="binding site" evidence="1">
    <location>
        <position position="311"/>
    </location>
    <ligand>
        <name>Mg(2+)</name>
        <dbReference type="ChEBI" id="CHEBI:18420"/>
        <label>2</label>
    </ligand>
</feature>
<feature type="binding site" evidence="1">
    <location>
        <position position="341"/>
    </location>
    <ligand>
        <name>Mg(2+)</name>
        <dbReference type="ChEBI" id="CHEBI:18420"/>
        <label>1</label>
    </ligand>
</feature>
<accession>A6L792</accession>
<proteinExistence type="inferred from homology"/>
<organism>
    <name type="scientific">Phocaeicola vulgatus (strain ATCC 8482 / DSM 1447 / JCM 5826 / CCUG 4940 / NBRC 14291 / NCTC 11154)</name>
    <name type="common">Bacteroides vulgatus</name>
    <dbReference type="NCBI Taxonomy" id="435590"/>
    <lineage>
        <taxon>Bacteria</taxon>
        <taxon>Pseudomonadati</taxon>
        <taxon>Bacteroidota</taxon>
        <taxon>Bacteroidia</taxon>
        <taxon>Bacteroidales</taxon>
        <taxon>Bacteroidaceae</taxon>
        <taxon>Phocaeicola</taxon>
    </lineage>
</organism>
<protein>
    <recommendedName>
        <fullName evidence="1">Xylose isomerase</fullName>
        <ecNumber evidence="1">5.3.1.5</ecNumber>
    </recommendedName>
</protein>
<evidence type="ECO:0000255" key="1">
    <source>
        <dbReference type="HAMAP-Rule" id="MF_00455"/>
    </source>
</evidence>
<sequence>MATKEYFPGIGKIKFEGKESKNPMAFRYYDAEKVINGKKMKDWLKFAMAWWHTLCAEGGDQFGGGTKKFPWNGDADKVQAAKNKMDAGFEFMQKMGIEYYCFHDVDLCEEADTIEEYEANLKEIVAYAKQKQAETGIKLLWGTANVFGHARYMNGAATNPEFDVVARAAVQIKNAIDATIELGGSNYVFWGGREGYMSLLNTDQKREKEHLAQMLTIARDYARSKGFTGTFLIEPKPMEPTKHQYDVDTETVVGFLKTHGLDKDFKVNIEVNHATLAGHTFEHELAVAVDNGMLGSIDANRGDYQNGWDTDQFPIDNYELTQAMMQIIRNGGLGNGGTNFDAKTRRNSTDLEDIFIAHIAGMDAMARALESAAALLNESPYCKMLSDRYASFDSGKGKEFEEGKLTLEDVVAYAKQNGEPKQVSGKQELYEAIVNMYC</sequence>